<organism>
    <name type="scientific">Burkholderia ambifaria (strain ATCC BAA-244 / DSM 16087 / CCUG 44356 / LMG 19182 / AMMD)</name>
    <name type="common">Burkholderia cepacia (strain AMMD)</name>
    <dbReference type="NCBI Taxonomy" id="339670"/>
    <lineage>
        <taxon>Bacteria</taxon>
        <taxon>Pseudomonadati</taxon>
        <taxon>Pseudomonadota</taxon>
        <taxon>Betaproteobacteria</taxon>
        <taxon>Burkholderiales</taxon>
        <taxon>Burkholderiaceae</taxon>
        <taxon>Burkholderia</taxon>
        <taxon>Burkholderia cepacia complex</taxon>
    </lineage>
</organism>
<keyword id="KW-0963">Cytoplasm</keyword>
<keyword id="KW-0238">DNA-binding</keyword>
<name>Y1764_BURCM</name>
<reference key="1">
    <citation type="submission" date="2006-08" db="EMBL/GenBank/DDBJ databases">
        <title>Complete sequence of chromosome 1 of Burkholderia cepacia AMMD.</title>
        <authorList>
            <person name="Copeland A."/>
            <person name="Lucas S."/>
            <person name="Lapidus A."/>
            <person name="Barry K."/>
            <person name="Detter J.C."/>
            <person name="Glavina del Rio T."/>
            <person name="Hammon N."/>
            <person name="Israni S."/>
            <person name="Pitluck S."/>
            <person name="Bruce D."/>
            <person name="Chain P."/>
            <person name="Malfatti S."/>
            <person name="Shin M."/>
            <person name="Vergez L."/>
            <person name="Schmutz J."/>
            <person name="Larimer F."/>
            <person name="Land M."/>
            <person name="Hauser L."/>
            <person name="Kyrpides N."/>
            <person name="Kim E."/>
            <person name="Parke J."/>
            <person name="Coenye T."/>
            <person name="Konstantinidis K."/>
            <person name="Ramette A."/>
            <person name="Tiedje J."/>
            <person name="Richardson P."/>
        </authorList>
    </citation>
    <scope>NUCLEOTIDE SEQUENCE [LARGE SCALE GENOMIC DNA]</scope>
    <source>
        <strain>ATCC BAA-244 / DSM 16087 / CCUG 44356 / LMG 19182 / AMMD</strain>
    </source>
</reference>
<accession>Q0BEV3</accession>
<dbReference type="EMBL" id="CP000440">
    <property type="protein sequence ID" value="ABI87320.1"/>
    <property type="molecule type" value="Genomic_DNA"/>
</dbReference>
<dbReference type="RefSeq" id="WP_006755698.1">
    <property type="nucleotide sequence ID" value="NZ_CP009798.1"/>
</dbReference>
<dbReference type="SMR" id="Q0BEV3"/>
<dbReference type="KEGG" id="bam:Bamb_1764"/>
<dbReference type="PATRIC" id="fig|339670.21.peg.3195"/>
<dbReference type="eggNOG" id="COG0718">
    <property type="taxonomic scope" value="Bacteria"/>
</dbReference>
<dbReference type="Proteomes" id="UP000000662">
    <property type="component" value="Chromosome 1"/>
</dbReference>
<dbReference type="GO" id="GO:0043590">
    <property type="term" value="C:bacterial nucleoid"/>
    <property type="evidence" value="ECO:0007669"/>
    <property type="project" value="UniProtKB-UniRule"/>
</dbReference>
<dbReference type="GO" id="GO:0005829">
    <property type="term" value="C:cytosol"/>
    <property type="evidence" value="ECO:0007669"/>
    <property type="project" value="TreeGrafter"/>
</dbReference>
<dbReference type="GO" id="GO:0003677">
    <property type="term" value="F:DNA binding"/>
    <property type="evidence" value="ECO:0007669"/>
    <property type="project" value="UniProtKB-UniRule"/>
</dbReference>
<dbReference type="FunFam" id="3.30.1310.10:FF:000001">
    <property type="entry name" value="Nucleoid-associated protein YbaB"/>
    <property type="match status" value="1"/>
</dbReference>
<dbReference type="Gene3D" id="3.30.1310.10">
    <property type="entry name" value="Nucleoid-associated protein YbaB-like domain"/>
    <property type="match status" value="1"/>
</dbReference>
<dbReference type="HAMAP" id="MF_00274">
    <property type="entry name" value="DNA_YbaB_EbfC"/>
    <property type="match status" value="1"/>
</dbReference>
<dbReference type="InterPro" id="IPR036894">
    <property type="entry name" value="YbaB-like_sf"/>
</dbReference>
<dbReference type="InterPro" id="IPR004401">
    <property type="entry name" value="YbaB/EbfC"/>
</dbReference>
<dbReference type="NCBIfam" id="TIGR00103">
    <property type="entry name" value="DNA_YbaB_EbfC"/>
    <property type="match status" value="1"/>
</dbReference>
<dbReference type="PANTHER" id="PTHR33449">
    <property type="entry name" value="NUCLEOID-ASSOCIATED PROTEIN YBAB"/>
    <property type="match status" value="1"/>
</dbReference>
<dbReference type="PANTHER" id="PTHR33449:SF1">
    <property type="entry name" value="NUCLEOID-ASSOCIATED PROTEIN YBAB"/>
    <property type="match status" value="1"/>
</dbReference>
<dbReference type="Pfam" id="PF02575">
    <property type="entry name" value="YbaB_DNA_bd"/>
    <property type="match status" value="1"/>
</dbReference>
<dbReference type="PIRSF" id="PIRSF004555">
    <property type="entry name" value="UCP004555"/>
    <property type="match status" value="1"/>
</dbReference>
<dbReference type="SUPFAM" id="SSF82607">
    <property type="entry name" value="YbaB-like"/>
    <property type="match status" value="1"/>
</dbReference>
<evidence type="ECO:0000255" key="1">
    <source>
        <dbReference type="HAMAP-Rule" id="MF_00274"/>
    </source>
</evidence>
<evidence type="ECO:0000256" key="2">
    <source>
        <dbReference type="SAM" id="MobiDB-lite"/>
    </source>
</evidence>
<sequence>MLKGNLAGLMKQAQQMQENMKKMQEQLAQIEVEGQSGAGLVKVTMTCRNEVRRVAIDPSLLADDKDMLEDLVAAAFNDAVRKAEATSQEKMSGMTSGLPLPPGFKLPF</sequence>
<protein>
    <recommendedName>
        <fullName evidence="1">Nucleoid-associated protein Bamb_1764</fullName>
    </recommendedName>
</protein>
<feature type="chain" id="PRO_1000003701" description="Nucleoid-associated protein Bamb_1764">
    <location>
        <begin position="1"/>
        <end position="108"/>
    </location>
</feature>
<feature type="region of interest" description="Disordered" evidence="2">
    <location>
        <begin position="85"/>
        <end position="108"/>
    </location>
</feature>
<feature type="compositionally biased region" description="Polar residues" evidence="2">
    <location>
        <begin position="85"/>
        <end position="95"/>
    </location>
</feature>
<feature type="compositionally biased region" description="Pro residues" evidence="2">
    <location>
        <begin position="99"/>
        <end position="108"/>
    </location>
</feature>
<proteinExistence type="inferred from homology"/>
<gene>
    <name type="ordered locus">Bamb_1764</name>
</gene>
<comment type="function">
    <text evidence="1">Binds to DNA and alters its conformation. May be involved in regulation of gene expression, nucleoid organization and DNA protection.</text>
</comment>
<comment type="subunit">
    <text evidence="1">Homodimer.</text>
</comment>
<comment type="subcellular location">
    <subcellularLocation>
        <location evidence="1">Cytoplasm</location>
        <location evidence="1">Nucleoid</location>
    </subcellularLocation>
</comment>
<comment type="similarity">
    <text evidence="1">Belongs to the YbaB/EbfC family.</text>
</comment>